<keyword id="KW-0106">Calcium</keyword>
<keyword id="KW-0966">Cell projection</keyword>
<keyword id="KW-0969">Cilium</keyword>
<keyword id="KW-0963">Cytoplasm</keyword>
<keyword id="KW-0206">Cytoskeleton</keyword>
<keyword id="KW-0903">Direct protein sequencing</keyword>
<keyword id="KW-0282">Flagellum</keyword>
<keyword id="KW-0479">Metal-binding</keyword>
<keyword id="KW-0597">Phosphoprotein</keyword>
<keyword id="KW-1185">Reference proteome</keyword>
<feature type="chain" id="PRO_0000089271" description="Calcium-binding tyrosine phosphorylation-regulated protein">
    <location>
        <begin position="1"/>
        <end position="498"/>
    </location>
</feature>
<feature type="domain" description="RIIa">
    <location>
        <begin position="12"/>
        <end position="49"/>
    </location>
</feature>
<feature type="region of interest" description="Disordered" evidence="2">
    <location>
        <begin position="74"/>
        <end position="107"/>
    </location>
</feature>
<feature type="region of interest" description="Disordered" evidence="2">
    <location>
        <begin position="135"/>
        <end position="164"/>
    </location>
</feature>
<feature type="region of interest" description="Disordered" evidence="2">
    <location>
        <begin position="247"/>
        <end position="279"/>
    </location>
</feature>
<feature type="compositionally biased region" description="Low complexity" evidence="2">
    <location>
        <begin position="145"/>
        <end position="164"/>
    </location>
</feature>
<protein>
    <recommendedName>
        <fullName>Calcium-binding tyrosine phosphorylation-regulated protein</fullName>
    </recommendedName>
    <alternativeName>
        <fullName>Sperm protein 13</fullName>
    </alternativeName>
    <alternativeName>
        <fullName>fSP13 autoantigen</fullName>
    </alternativeName>
</protein>
<organism>
    <name type="scientific">Vulpes vulpes</name>
    <name type="common">Red fox</name>
    <dbReference type="NCBI Taxonomy" id="9627"/>
    <lineage>
        <taxon>Eukaryota</taxon>
        <taxon>Metazoa</taxon>
        <taxon>Chordata</taxon>
        <taxon>Craniata</taxon>
        <taxon>Vertebrata</taxon>
        <taxon>Euteleostomi</taxon>
        <taxon>Mammalia</taxon>
        <taxon>Eutheria</taxon>
        <taxon>Laurasiatheria</taxon>
        <taxon>Carnivora</taxon>
        <taxon>Caniformia</taxon>
        <taxon>Canidae</taxon>
        <taxon>Vulpes</taxon>
    </lineage>
</organism>
<proteinExistence type="evidence at protein level"/>
<gene>
    <name type="primary">CABYR</name>
    <name type="synonym">SP13</name>
</gene>
<dbReference type="EMBL" id="AJ421969">
    <property type="protein sequence ID" value="CAD19163.1"/>
    <property type="molecule type" value="mRNA"/>
</dbReference>
<dbReference type="SMR" id="Q710D7"/>
<dbReference type="STRING" id="9627.ENSVVUP00000003098"/>
<dbReference type="Ensembl" id="ENSVVUT00000004253">
    <property type="protein sequence ID" value="ENSVVUP00000003088"/>
    <property type="gene ID" value="ENSVVUG00000002402"/>
</dbReference>
<dbReference type="Proteomes" id="UP000286640">
    <property type="component" value="Unplaced"/>
</dbReference>
<dbReference type="GO" id="GO:0005737">
    <property type="term" value="C:cytoplasm"/>
    <property type="evidence" value="ECO:0007669"/>
    <property type="project" value="UniProtKB-SubCell"/>
</dbReference>
<dbReference type="GO" id="GO:0005856">
    <property type="term" value="C:cytoskeleton"/>
    <property type="evidence" value="ECO:0007669"/>
    <property type="project" value="UniProtKB-SubCell"/>
</dbReference>
<dbReference type="GO" id="GO:0035686">
    <property type="term" value="C:sperm fibrous sheath"/>
    <property type="evidence" value="ECO:0007669"/>
    <property type="project" value="TreeGrafter"/>
</dbReference>
<dbReference type="GO" id="GO:0097228">
    <property type="term" value="C:sperm principal piece"/>
    <property type="evidence" value="ECO:0000250"/>
    <property type="project" value="UniProtKB"/>
</dbReference>
<dbReference type="GO" id="GO:0005509">
    <property type="term" value="F:calcium ion binding"/>
    <property type="evidence" value="ECO:0007669"/>
    <property type="project" value="InterPro"/>
</dbReference>
<dbReference type="GO" id="GO:0048240">
    <property type="term" value="P:sperm capacitation"/>
    <property type="evidence" value="ECO:0007669"/>
    <property type="project" value="InterPro"/>
</dbReference>
<dbReference type="CDD" id="cd12100">
    <property type="entry name" value="DD_CABYR_SP17"/>
    <property type="match status" value="1"/>
</dbReference>
<dbReference type="FunFam" id="1.20.890.10:FF:000005">
    <property type="entry name" value="calcium-binding tyrosine phosphorylation-regulated protein isoform X1"/>
    <property type="match status" value="1"/>
</dbReference>
<dbReference type="Gene3D" id="1.20.890.10">
    <property type="entry name" value="cAMP-dependent protein kinase regulatory subunit, dimerization-anchoring domain"/>
    <property type="match status" value="1"/>
</dbReference>
<dbReference type="InterPro" id="IPR038848">
    <property type="entry name" value="CABYR"/>
</dbReference>
<dbReference type="InterPro" id="IPR003117">
    <property type="entry name" value="cAMP_dep_PK_reg_su_I/II_a/b"/>
</dbReference>
<dbReference type="InterPro" id="IPR047579">
    <property type="entry name" value="DD_CABYR_SP17"/>
</dbReference>
<dbReference type="PANTHER" id="PTHR15494">
    <property type="entry name" value="CALCIUM-BINDING TYROSINE PHOSPHORYLATION-REGULATED PROTEIN"/>
    <property type="match status" value="1"/>
</dbReference>
<dbReference type="PANTHER" id="PTHR15494:SF0">
    <property type="entry name" value="CALCIUM-BINDING TYROSINE PHOSPHORYLATION-REGULATED PROTEIN"/>
    <property type="match status" value="1"/>
</dbReference>
<dbReference type="Pfam" id="PF02197">
    <property type="entry name" value="RIIa"/>
    <property type="match status" value="1"/>
</dbReference>
<dbReference type="SMART" id="SM00394">
    <property type="entry name" value="RIIa"/>
    <property type="match status" value="1"/>
</dbReference>
<dbReference type="SUPFAM" id="SSF47391">
    <property type="entry name" value="Dimerization-anchoring domain of cAMP-dependent PK regulatory subunit"/>
    <property type="match status" value="1"/>
</dbReference>
<sequence length="498" mass="53087">MISSKPRLVVPYGLKTLLEGVSRAILKINPPNITQFAAVYFKELIVFREGNTSLDIKDLVKQFHQIKVEKWSEGTTQEKEPECMEEQVETSVVSQEPTRMEKSTDTEEDNIAGPLFMNKTTQFPSVHAEVLLEPEETPEAACGGSPKPSTPKAVTPPSSPSPAAVSQEFAYVPADPAQFAAQMLGNVSSIHSDQSDVLMVDVATSMPVFSEEVLSSEAAEDARVAIPSVYSAEVVALQVLSQTSVHVDLGPKPKDDEAEPTTASSFPLQDEQDPPAYDQAPEVPLQADIEVTSFVHVSSIYNNEPVIEGVTYVEQIPEHIVIPFTDHVASLKDNEPPDSPIPVACDTGMSEKTVGSVSLAQLEVESHYSSVHMEAEASVLFSDTSLKGQPAQFPDAGGSTKAVGSEKPLHLEVEFTALVPGNSGQEESQGSSAAQEMEVKLVLSGEAATAVLSAASVRAAGGSPTPVPEGLTEPELEPELEAALEQGLMKPDAETTTV</sequence>
<accession>Q710D7</accession>
<comment type="function">
    <text evidence="1">May function as a regulator of both motility- and head-associated functions such as capacitation and the acrosome reaction. Binds calcium in vitro (By similarity).</text>
</comment>
<comment type="subunit">
    <text evidence="1">Interacts with FSCB.</text>
</comment>
<comment type="subcellular location">
    <subcellularLocation>
        <location evidence="3">Cytoplasm</location>
    </subcellularLocation>
    <subcellularLocation>
        <location evidence="3">Cytoplasm</location>
        <location evidence="3">Cytoskeleton</location>
    </subcellularLocation>
    <subcellularLocation>
        <location evidence="3">Cell projection</location>
        <location evidence="3">Cilium</location>
        <location evidence="3">Flagellum</location>
    </subcellularLocation>
    <text>Localizes to fibrous sheath of the principal piece of sperm flagella.</text>
</comment>
<comment type="tissue specificity">
    <text evidence="3">Expressed in testis.</text>
</comment>
<comment type="PTM">
    <text evidence="1">Phosphorylated on tyrosine residues during in vitro capacitation. Dephosphorylation affects its ability to bind calcium (By similarity).</text>
</comment>
<comment type="miscellaneous">
    <text>On the 2D-gel the determined pI of this protein is: 4.3 to 4.6, its MW is: 97 kDa.</text>
</comment>
<evidence type="ECO:0000250" key="1"/>
<evidence type="ECO:0000256" key="2">
    <source>
        <dbReference type="SAM" id="MobiDB-lite"/>
    </source>
</evidence>
<evidence type="ECO:0000269" key="3">
    <source>
    </source>
</evidence>
<reference key="1">
    <citation type="journal article" date="2005" name="Biol. Reprod.">
        <title>Identification of a new, testis-specific sperm antigen localized on the principal piece of the spermatozoa tail in the fox (Vulpes vulpes).</title>
        <authorList>
            <person name="Verdier Y."/>
            <person name="Farre G."/>
            <person name="Rouet N."/>
            <person name="Kele Z."/>
            <person name="Janaky T."/>
            <person name="Boue F."/>
        </authorList>
    </citation>
    <scope>NUCLEOTIDE SEQUENCE [MRNA]</scope>
    <scope>PROTEIN SEQUENCE OF 270-283</scope>
    <scope>SUBCELLULAR LOCATION</scope>
    <scope>IDENTIFICATION BY MASS SPECTROMETRY</scope>
    <scope>TISSUE SPECIFICITY</scope>
    <source>
        <tissue>Testis</tissue>
    </source>
</reference>
<reference key="2">
    <citation type="journal article" date="2002" name="J. Androl.">
        <title>Partial characterization of antigenic sperm proteins in foxes (Vulpes vulpes).</title>
        <authorList>
            <person name="Verdier Y."/>
            <person name="Rouet N."/>
            <person name="Artois M."/>
            <person name="Boue F."/>
        </authorList>
    </citation>
    <scope>IDENTIFICATION BY 2D-PAGE</scope>
</reference>
<name>CABYR_VULVU</name>